<evidence type="ECO:0000255" key="1">
    <source>
        <dbReference type="HAMAP-Rule" id="MF_00368"/>
    </source>
</evidence>
<evidence type="ECO:0000305" key="2"/>
<organism>
    <name type="scientific">Streptococcus pyogenes serotype M28 (strain MGAS6180)</name>
    <dbReference type="NCBI Taxonomy" id="319701"/>
    <lineage>
        <taxon>Bacteria</taxon>
        <taxon>Bacillati</taxon>
        <taxon>Bacillota</taxon>
        <taxon>Bacilli</taxon>
        <taxon>Lactobacillales</taxon>
        <taxon>Streptococcaceae</taxon>
        <taxon>Streptococcus</taxon>
    </lineage>
</organism>
<name>RL7_STRPM</name>
<accession>Q48TS3</accession>
<sequence length="126" mass="12860">MEEITMALNIENIIAEIKEASILELNDLVKAIEEEFGVTAAAPVAAAAAGGAEEAAKDSFDVELTSAGDKKVGVIKAVREITGLGLKEAKGLVDGAPANVKEGVAAAEAEEIKAKLEEAGATITLK</sequence>
<comment type="function">
    <text evidence="1">Forms part of the ribosomal stalk which helps the ribosome interact with GTP-bound translation factors. Is thus essential for accurate translation.</text>
</comment>
<comment type="subunit">
    <text evidence="1">Homodimer. Part of the ribosomal stalk of the 50S ribosomal subunit. Forms a multimeric L10(L12)X complex, where L10 forms an elongated spine to which 2 to 4 L12 dimers bind in a sequential fashion. Binds GTP-bound translation factors.</text>
</comment>
<comment type="similarity">
    <text evidence="1">Belongs to the bacterial ribosomal protein bL12 family.</text>
</comment>
<keyword id="KW-0687">Ribonucleoprotein</keyword>
<keyword id="KW-0689">Ribosomal protein</keyword>
<proteinExistence type="inferred from homology"/>
<gene>
    <name evidence="1" type="primary">rplL</name>
    <name type="ordered locus">M28_Spy0770</name>
</gene>
<protein>
    <recommendedName>
        <fullName evidence="1">Large ribosomal subunit protein bL12</fullName>
    </recommendedName>
    <alternativeName>
        <fullName evidence="2">50S ribosomal protein L7/L12</fullName>
    </alternativeName>
</protein>
<reference key="1">
    <citation type="journal article" date="2005" name="J. Infect. Dis.">
        <title>Genome sequence of a serotype M28 strain of group A Streptococcus: potential new insights into puerperal sepsis and bacterial disease specificity.</title>
        <authorList>
            <person name="Green N.M."/>
            <person name="Zhang S."/>
            <person name="Porcella S.F."/>
            <person name="Nagiec M.J."/>
            <person name="Barbian K.D."/>
            <person name="Beres S.B."/>
            <person name="Lefebvre R.B."/>
            <person name="Musser J.M."/>
        </authorList>
    </citation>
    <scope>NUCLEOTIDE SEQUENCE [LARGE SCALE GENOMIC DNA]</scope>
    <source>
        <strain>MGAS6180</strain>
    </source>
</reference>
<feature type="chain" id="PRO_0000243503" description="Large ribosomal subunit protein bL12">
    <location>
        <begin position="1"/>
        <end position="126"/>
    </location>
</feature>
<dbReference type="EMBL" id="CP000056">
    <property type="protein sequence ID" value="AAX71883.1"/>
    <property type="molecule type" value="Genomic_DNA"/>
</dbReference>
<dbReference type="SMR" id="Q48TS3"/>
<dbReference type="KEGG" id="spb:M28_Spy0770"/>
<dbReference type="HOGENOM" id="CLU_086499_3_2_9"/>
<dbReference type="GO" id="GO:0022625">
    <property type="term" value="C:cytosolic large ribosomal subunit"/>
    <property type="evidence" value="ECO:0007669"/>
    <property type="project" value="TreeGrafter"/>
</dbReference>
<dbReference type="GO" id="GO:0003729">
    <property type="term" value="F:mRNA binding"/>
    <property type="evidence" value="ECO:0007669"/>
    <property type="project" value="TreeGrafter"/>
</dbReference>
<dbReference type="GO" id="GO:0003735">
    <property type="term" value="F:structural constituent of ribosome"/>
    <property type="evidence" value="ECO:0007669"/>
    <property type="project" value="InterPro"/>
</dbReference>
<dbReference type="GO" id="GO:0006412">
    <property type="term" value="P:translation"/>
    <property type="evidence" value="ECO:0007669"/>
    <property type="project" value="UniProtKB-UniRule"/>
</dbReference>
<dbReference type="CDD" id="cd00387">
    <property type="entry name" value="Ribosomal_L7_L12"/>
    <property type="match status" value="1"/>
</dbReference>
<dbReference type="FunFam" id="3.30.1390.10:FF:000001">
    <property type="entry name" value="50S ribosomal protein L7/L12"/>
    <property type="match status" value="1"/>
</dbReference>
<dbReference type="Gene3D" id="3.30.1390.10">
    <property type="match status" value="1"/>
</dbReference>
<dbReference type="Gene3D" id="1.20.5.710">
    <property type="entry name" value="Single helix bin"/>
    <property type="match status" value="1"/>
</dbReference>
<dbReference type="HAMAP" id="MF_00368">
    <property type="entry name" value="Ribosomal_bL12"/>
    <property type="match status" value="1"/>
</dbReference>
<dbReference type="InterPro" id="IPR000206">
    <property type="entry name" value="Ribosomal_bL12"/>
</dbReference>
<dbReference type="InterPro" id="IPR013823">
    <property type="entry name" value="Ribosomal_bL12_C"/>
</dbReference>
<dbReference type="InterPro" id="IPR014719">
    <property type="entry name" value="Ribosomal_bL12_C/ClpS-like"/>
</dbReference>
<dbReference type="InterPro" id="IPR008932">
    <property type="entry name" value="Ribosomal_bL12_oligo"/>
</dbReference>
<dbReference type="InterPro" id="IPR036235">
    <property type="entry name" value="Ribosomal_bL12_oligo_N_sf"/>
</dbReference>
<dbReference type="NCBIfam" id="TIGR00855">
    <property type="entry name" value="L12"/>
    <property type="match status" value="1"/>
</dbReference>
<dbReference type="PANTHER" id="PTHR45987">
    <property type="entry name" value="39S RIBOSOMAL PROTEIN L12"/>
    <property type="match status" value="1"/>
</dbReference>
<dbReference type="PANTHER" id="PTHR45987:SF4">
    <property type="entry name" value="LARGE RIBOSOMAL SUBUNIT PROTEIN BL12M"/>
    <property type="match status" value="1"/>
</dbReference>
<dbReference type="Pfam" id="PF00542">
    <property type="entry name" value="Ribosomal_L12"/>
    <property type="match status" value="1"/>
</dbReference>
<dbReference type="Pfam" id="PF16320">
    <property type="entry name" value="Ribosomal_L12_N"/>
    <property type="match status" value="1"/>
</dbReference>
<dbReference type="SUPFAM" id="SSF54736">
    <property type="entry name" value="ClpS-like"/>
    <property type="match status" value="1"/>
</dbReference>
<dbReference type="SUPFAM" id="SSF48300">
    <property type="entry name" value="Ribosomal protein L7/12, oligomerisation (N-terminal) domain"/>
    <property type="match status" value="1"/>
</dbReference>